<keyword id="KW-0479">Metal-binding</keyword>
<keyword id="KW-1185">Reference proteome</keyword>
<keyword id="KW-0862">Zinc</keyword>
<keyword id="KW-0863">Zinc-finger</keyword>
<proteinExistence type="predicted"/>
<organism>
    <name type="scientific">Ictalurid herpesvirus 1 (strain Auburn)</name>
    <name type="common">IcHV-1</name>
    <name type="synonym">Channel catfish herpesvirus</name>
    <dbReference type="NCBI Taxonomy" id="766178"/>
    <lineage>
        <taxon>Viruses</taxon>
        <taxon>Duplodnaviria</taxon>
        <taxon>Heunggongvirae</taxon>
        <taxon>Peploviricota</taxon>
        <taxon>Herviviricetes</taxon>
        <taxon>Herpesvirales</taxon>
        <taxon>Alloherpesviridae</taxon>
        <taxon>Ictavirus</taxon>
        <taxon>Ictavirus ictaluridallo1</taxon>
        <taxon>Ictalurid herpesvirus 1</taxon>
    </lineage>
</organism>
<reference key="1">
    <citation type="journal article" date="1992" name="Virology">
        <title>Channel catfish virus: a new type of herpesvirus.</title>
        <authorList>
            <person name="Davison A.J."/>
        </authorList>
    </citation>
    <scope>NUCLEOTIDE SEQUENCE [LARGE SCALE GENOMIC DNA]</scope>
</reference>
<sequence length="158" mass="17082">MATRPKVRRPDRALYVPPKVDRIKRVIFACGHRKRCEIGYRPLGDSGNCGPCGARRDVFAPDLYGSGPLPPCPVCGRAVVGPTVREACGHVTCNACETEACAVDRLCIGGGRRLVAICDPYPPYPGPRWRGPRPTRPEAHEAVQRSRGSSEDACTCAP</sequence>
<organismHost>
    <name type="scientific">Ictaluridae</name>
    <name type="common">bullhead catfishes</name>
    <dbReference type="NCBI Taxonomy" id="7996"/>
</organismHost>
<name>VG09_ICHVA</name>
<gene>
    <name type="primary">ORF9</name>
</gene>
<accession>Q00163</accession>
<dbReference type="EMBL" id="M75136">
    <property type="protein sequence ID" value="AAA88190.1"/>
    <property type="molecule type" value="Genomic_DNA"/>
</dbReference>
<dbReference type="EMBL" id="M75136">
    <property type="protein sequence ID" value="AAA88112.1"/>
    <property type="molecule type" value="Genomic_DNA"/>
</dbReference>
<dbReference type="PIR" id="A36787">
    <property type="entry name" value="ZBBEI1"/>
</dbReference>
<dbReference type="KEGG" id="vg:1488377"/>
<dbReference type="KEGG" id="vg:1488419"/>
<dbReference type="Proteomes" id="UP000007643">
    <property type="component" value="Segment"/>
</dbReference>
<dbReference type="GO" id="GO:0008270">
    <property type="term" value="F:zinc ion binding"/>
    <property type="evidence" value="ECO:0007669"/>
    <property type="project" value="UniProtKB-KW"/>
</dbReference>
<evidence type="ECO:0000256" key="1">
    <source>
        <dbReference type="SAM" id="MobiDB-lite"/>
    </source>
</evidence>
<feature type="chain" id="PRO_0000222095" description="Putative zinc-binding protein ORF9">
    <location>
        <begin position="1"/>
        <end position="158"/>
    </location>
</feature>
<feature type="zinc finger region" description="RING-type; degenerate">
    <location>
        <begin position="72"/>
        <end position="111"/>
    </location>
</feature>
<feature type="region of interest" description="Disordered" evidence="1">
    <location>
        <begin position="126"/>
        <end position="158"/>
    </location>
</feature>
<feature type="compositionally biased region" description="Basic and acidic residues" evidence="1">
    <location>
        <begin position="135"/>
        <end position="150"/>
    </location>
</feature>
<protein>
    <recommendedName>
        <fullName>Putative zinc-binding protein ORF9</fullName>
    </recommendedName>
</protein>